<reference key="1">
    <citation type="journal article" date="2008" name="J. Bacteriol.">
        <title>The pangenome structure of Escherichia coli: comparative genomic analysis of E. coli commensal and pathogenic isolates.</title>
        <authorList>
            <person name="Rasko D.A."/>
            <person name="Rosovitz M.J."/>
            <person name="Myers G.S.A."/>
            <person name="Mongodin E.F."/>
            <person name="Fricke W.F."/>
            <person name="Gajer P."/>
            <person name="Crabtree J."/>
            <person name="Sebaihia M."/>
            <person name="Thomson N.R."/>
            <person name="Chaudhuri R."/>
            <person name="Henderson I.R."/>
            <person name="Sperandio V."/>
            <person name="Ravel J."/>
        </authorList>
    </citation>
    <scope>NUCLEOTIDE SEQUENCE [LARGE SCALE GENOMIC DNA]</scope>
    <source>
        <strain>HS</strain>
    </source>
</reference>
<dbReference type="EMBL" id="CP000802">
    <property type="protein sequence ID" value="ABV06813.1"/>
    <property type="molecule type" value="Genomic_DNA"/>
</dbReference>
<dbReference type="RefSeq" id="WP_000254839.1">
    <property type="nucleotide sequence ID" value="NC_009800.1"/>
</dbReference>
<dbReference type="SMR" id="A8A2Q9"/>
<dbReference type="GeneID" id="93774718"/>
<dbReference type="KEGG" id="ecx:EcHS_A2548"/>
<dbReference type="HOGENOM" id="CLU_070331_1_0_6"/>
<dbReference type="GO" id="GO:0005886">
    <property type="term" value="C:plasma membrane"/>
    <property type="evidence" value="ECO:0007669"/>
    <property type="project" value="UniProtKB-SubCell"/>
</dbReference>
<dbReference type="GO" id="GO:0009675">
    <property type="term" value="F:high-affinity sulfate:proton symporter activity"/>
    <property type="evidence" value="ECO:0007669"/>
    <property type="project" value="TreeGrafter"/>
</dbReference>
<dbReference type="GO" id="GO:0019344">
    <property type="term" value="P:cysteine biosynthetic process"/>
    <property type="evidence" value="ECO:0007669"/>
    <property type="project" value="UniProtKB-UniRule"/>
</dbReference>
<dbReference type="GO" id="GO:0000103">
    <property type="term" value="P:sulfate assimilation"/>
    <property type="evidence" value="ECO:0007669"/>
    <property type="project" value="InterPro"/>
</dbReference>
<dbReference type="HAMAP" id="MF_00468">
    <property type="entry name" value="CysZ"/>
    <property type="match status" value="1"/>
</dbReference>
<dbReference type="InterPro" id="IPR050480">
    <property type="entry name" value="CysZ_sulfate_transptr"/>
</dbReference>
<dbReference type="InterPro" id="IPR022985">
    <property type="entry name" value="Sulfate_CysZ"/>
</dbReference>
<dbReference type="NCBIfam" id="NF003433">
    <property type="entry name" value="PRK04949.1"/>
    <property type="match status" value="1"/>
</dbReference>
<dbReference type="PANTHER" id="PTHR37468">
    <property type="entry name" value="SULFATE TRANSPORTER CYSZ"/>
    <property type="match status" value="1"/>
</dbReference>
<dbReference type="PANTHER" id="PTHR37468:SF1">
    <property type="entry name" value="SULFATE TRANSPORTER CYSZ"/>
    <property type="match status" value="1"/>
</dbReference>
<dbReference type="Pfam" id="PF07264">
    <property type="entry name" value="EI24"/>
    <property type="match status" value="1"/>
</dbReference>
<feature type="chain" id="PRO_1000060362" description="Sulfate transporter CysZ">
    <location>
        <begin position="1"/>
        <end position="253"/>
    </location>
</feature>
<feature type="transmembrane region" description="Helical" evidence="1">
    <location>
        <begin position="31"/>
        <end position="51"/>
    </location>
</feature>
<feature type="transmembrane region" description="Helical" evidence="1">
    <location>
        <begin position="75"/>
        <end position="95"/>
    </location>
</feature>
<feature type="transmembrane region" description="Helical" evidence="1">
    <location>
        <begin position="151"/>
        <end position="171"/>
    </location>
</feature>
<feature type="transmembrane region" description="Helical" evidence="1">
    <location>
        <begin position="222"/>
        <end position="242"/>
    </location>
</feature>
<organism>
    <name type="scientific">Escherichia coli O9:H4 (strain HS)</name>
    <dbReference type="NCBI Taxonomy" id="331112"/>
    <lineage>
        <taxon>Bacteria</taxon>
        <taxon>Pseudomonadati</taxon>
        <taxon>Pseudomonadota</taxon>
        <taxon>Gammaproteobacteria</taxon>
        <taxon>Enterobacterales</taxon>
        <taxon>Enterobacteriaceae</taxon>
        <taxon>Escherichia</taxon>
    </lineage>
</organism>
<accession>A8A2Q9</accession>
<protein>
    <recommendedName>
        <fullName evidence="1">Sulfate transporter CysZ</fullName>
    </recommendedName>
</protein>
<proteinExistence type="inferred from homology"/>
<gene>
    <name evidence="1" type="primary">cysZ</name>
    <name type="ordered locus">EcHS_A2548</name>
</gene>
<name>CYSZ_ECOHS</name>
<comment type="function">
    <text evidence="1">High affinity, high specificity proton-dependent sulfate transporter, which mediates sulfate uptake. Provides the sulfur source for the cysteine synthesis pathway.</text>
</comment>
<comment type="subcellular location">
    <subcellularLocation>
        <location evidence="1">Cell inner membrane</location>
        <topology evidence="1">Multi-pass membrane protein</topology>
    </subcellularLocation>
</comment>
<comment type="similarity">
    <text evidence="1">Belongs to the CysZ family.</text>
</comment>
<evidence type="ECO:0000255" key="1">
    <source>
        <dbReference type="HAMAP-Rule" id="MF_00468"/>
    </source>
</evidence>
<keyword id="KW-0028">Amino-acid biosynthesis</keyword>
<keyword id="KW-0997">Cell inner membrane</keyword>
<keyword id="KW-1003">Cell membrane</keyword>
<keyword id="KW-0198">Cysteine biosynthesis</keyword>
<keyword id="KW-0472">Membrane</keyword>
<keyword id="KW-0764">Sulfate transport</keyword>
<keyword id="KW-0812">Transmembrane</keyword>
<keyword id="KW-1133">Transmembrane helix</keyword>
<keyword id="KW-0813">Transport</keyword>
<sequence length="253" mass="29305">MVSSFTSAPRSGFYYFAQGWKLVSQPGIRRFVILPLLVNILLMGGAFWWLFTQLDVWIPTLMSYVPDWLQWLSYLLWPLAVISVLLVFGYFFSTIANWIAAPFNGLLAEQLEARLTGATPPDTGIFGIMKDVPRIMKREWQKFAWYLPRAIVLLILYFIPGIGQTVAPVLWFLFSAWMLAIQYCDYPFDNHKVPFKEMRTALRTRKITNMQFGALTSLFTMIPLLNLFIMPVAVCGATAMWVDCYRDKHAMWR</sequence>